<sequence length="132" mass="14173">MSMQDTVADMLTRIRNAQMARKVSVAMPSSKLRKSIADLLVQEGYIASAEVTDEGNGKATLSIELKYFEGKPVIEVIKRYSRPGLRQYRGKDAIPSVQQGLGVAIVSTSKGIMSDRAARAAGIGGEIIAFVA</sequence>
<feature type="chain" id="PRO_1000073196" description="Small ribosomal subunit protein uS8">
    <location>
        <begin position="1"/>
        <end position="132"/>
    </location>
</feature>
<evidence type="ECO:0000255" key="1">
    <source>
        <dbReference type="HAMAP-Rule" id="MF_01302"/>
    </source>
</evidence>
<evidence type="ECO:0000305" key="2"/>
<name>RS8_PSYWF</name>
<organism>
    <name type="scientific">Psychrobacter sp. (strain PRwf-1)</name>
    <dbReference type="NCBI Taxonomy" id="349106"/>
    <lineage>
        <taxon>Bacteria</taxon>
        <taxon>Pseudomonadati</taxon>
        <taxon>Pseudomonadota</taxon>
        <taxon>Gammaproteobacteria</taxon>
        <taxon>Moraxellales</taxon>
        <taxon>Moraxellaceae</taxon>
        <taxon>Psychrobacter</taxon>
    </lineage>
</organism>
<accession>A5WCK4</accession>
<gene>
    <name evidence="1" type="primary">rpsH</name>
    <name type="ordered locus">PsycPRwf_0440</name>
</gene>
<proteinExistence type="inferred from homology"/>
<keyword id="KW-0687">Ribonucleoprotein</keyword>
<keyword id="KW-0689">Ribosomal protein</keyword>
<keyword id="KW-0694">RNA-binding</keyword>
<keyword id="KW-0699">rRNA-binding</keyword>
<reference key="1">
    <citation type="submission" date="2007-05" db="EMBL/GenBank/DDBJ databases">
        <title>Complete sequence of chromosome of Psychrobacter sp. PRwf-1.</title>
        <authorList>
            <consortium name="US DOE Joint Genome Institute"/>
            <person name="Copeland A."/>
            <person name="Lucas S."/>
            <person name="Lapidus A."/>
            <person name="Barry K."/>
            <person name="Detter J.C."/>
            <person name="Glavina del Rio T."/>
            <person name="Hammon N."/>
            <person name="Israni S."/>
            <person name="Dalin E."/>
            <person name="Tice H."/>
            <person name="Pitluck S."/>
            <person name="Chain P."/>
            <person name="Malfatti S."/>
            <person name="Shin M."/>
            <person name="Vergez L."/>
            <person name="Schmutz J."/>
            <person name="Larimer F."/>
            <person name="Land M."/>
            <person name="Hauser L."/>
            <person name="Kyrpides N."/>
            <person name="Kim E."/>
            <person name="Tiedje J."/>
            <person name="Richardson P."/>
        </authorList>
    </citation>
    <scope>NUCLEOTIDE SEQUENCE [LARGE SCALE GENOMIC DNA]</scope>
    <source>
        <strain>PRwf-1</strain>
    </source>
</reference>
<protein>
    <recommendedName>
        <fullName evidence="1">Small ribosomal subunit protein uS8</fullName>
    </recommendedName>
    <alternativeName>
        <fullName evidence="2">30S ribosomal protein S8</fullName>
    </alternativeName>
</protein>
<dbReference type="EMBL" id="CP000713">
    <property type="protein sequence ID" value="ABQ93395.1"/>
    <property type="molecule type" value="Genomic_DNA"/>
</dbReference>
<dbReference type="SMR" id="A5WCK4"/>
<dbReference type="STRING" id="349106.PsycPRwf_0440"/>
<dbReference type="KEGG" id="prw:PsycPRwf_0440"/>
<dbReference type="eggNOG" id="COG0096">
    <property type="taxonomic scope" value="Bacteria"/>
</dbReference>
<dbReference type="HOGENOM" id="CLU_098428_0_0_6"/>
<dbReference type="GO" id="GO:1990904">
    <property type="term" value="C:ribonucleoprotein complex"/>
    <property type="evidence" value="ECO:0007669"/>
    <property type="project" value="UniProtKB-KW"/>
</dbReference>
<dbReference type="GO" id="GO:0005840">
    <property type="term" value="C:ribosome"/>
    <property type="evidence" value="ECO:0007669"/>
    <property type="project" value="UniProtKB-KW"/>
</dbReference>
<dbReference type="GO" id="GO:0019843">
    <property type="term" value="F:rRNA binding"/>
    <property type="evidence" value="ECO:0007669"/>
    <property type="project" value="UniProtKB-UniRule"/>
</dbReference>
<dbReference type="GO" id="GO:0003735">
    <property type="term" value="F:structural constituent of ribosome"/>
    <property type="evidence" value="ECO:0007669"/>
    <property type="project" value="InterPro"/>
</dbReference>
<dbReference type="GO" id="GO:0006412">
    <property type="term" value="P:translation"/>
    <property type="evidence" value="ECO:0007669"/>
    <property type="project" value="UniProtKB-UniRule"/>
</dbReference>
<dbReference type="FunFam" id="3.30.1370.30:FF:000002">
    <property type="entry name" value="30S ribosomal protein S8"/>
    <property type="match status" value="1"/>
</dbReference>
<dbReference type="FunFam" id="3.30.1490.10:FF:000001">
    <property type="entry name" value="30S ribosomal protein S8"/>
    <property type="match status" value="1"/>
</dbReference>
<dbReference type="Gene3D" id="3.30.1370.30">
    <property type="match status" value="1"/>
</dbReference>
<dbReference type="Gene3D" id="3.30.1490.10">
    <property type="match status" value="1"/>
</dbReference>
<dbReference type="HAMAP" id="MF_01302_B">
    <property type="entry name" value="Ribosomal_uS8_B"/>
    <property type="match status" value="1"/>
</dbReference>
<dbReference type="InterPro" id="IPR000630">
    <property type="entry name" value="Ribosomal_uS8"/>
</dbReference>
<dbReference type="InterPro" id="IPR047863">
    <property type="entry name" value="Ribosomal_uS8_CS"/>
</dbReference>
<dbReference type="InterPro" id="IPR035987">
    <property type="entry name" value="Ribosomal_uS8_sf"/>
</dbReference>
<dbReference type="NCBIfam" id="NF001109">
    <property type="entry name" value="PRK00136.1"/>
    <property type="match status" value="1"/>
</dbReference>
<dbReference type="PANTHER" id="PTHR11758">
    <property type="entry name" value="40S RIBOSOMAL PROTEIN S15A"/>
    <property type="match status" value="1"/>
</dbReference>
<dbReference type="Pfam" id="PF00410">
    <property type="entry name" value="Ribosomal_S8"/>
    <property type="match status" value="1"/>
</dbReference>
<dbReference type="SUPFAM" id="SSF56047">
    <property type="entry name" value="Ribosomal protein S8"/>
    <property type="match status" value="1"/>
</dbReference>
<dbReference type="PROSITE" id="PS00053">
    <property type="entry name" value="RIBOSOMAL_S8"/>
    <property type="match status" value="1"/>
</dbReference>
<comment type="function">
    <text evidence="1">One of the primary rRNA binding proteins, it binds directly to 16S rRNA central domain where it helps coordinate assembly of the platform of the 30S subunit.</text>
</comment>
<comment type="subunit">
    <text evidence="1">Part of the 30S ribosomal subunit. Contacts proteins S5 and S12.</text>
</comment>
<comment type="similarity">
    <text evidence="1">Belongs to the universal ribosomal protein uS8 family.</text>
</comment>